<organism>
    <name type="scientific">Listeria innocua serovar 6a (strain ATCC BAA-680 / CLIP 11262)</name>
    <dbReference type="NCBI Taxonomy" id="272626"/>
    <lineage>
        <taxon>Bacteria</taxon>
        <taxon>Bacillati</taxon>
        <taxon>Bacillota</taxon>
        <taxon>Bacilli</taxon>
        <taxon>Bacillales</taxon>
        <taxon>Listeriaceae</taxon>
        <taxon>Listeria</taxon>
    </lineage>
</organism>
<sequence>MNPIVEFCVNNLASGADAAFAKLDADDSLDVIEYDCLTYCDLCATSLFALVDGEVVRGETAEELVANIYTFLEENPF</sequence>
<feature type="chain" id="PRO_0000165891" description="UPF0349 protein lin2491">
    <location>
        <begin position="1"/>
        <end position="77"/>
    </location>
</feature>
<protein>
    <recommendedName>
        <fullName evidence="1">UPF0349 protein lin2491</fullName>
    </recommendedName>
</protein>
<evidence type="ECO:0000255" key="1">
    <source>
        <dbReference type="HAMAP-Rule" id="MF_01542"/>
    </source>
</evidence>
<reference key="1">
    <citation type="journal article" date="2001" name="Science">
        <title>Comparative genomics of Listeria species.</title>
        <authorList>
            <person name="Glaser P."/>
            <person name="Frangeul L."/>
            <person name="Buchrieser C."/>
            <person name="Rusniok C."/>
            <person name="Amend A."/>
            <person name="Baquero F."/>
            <person name="Berche P."/>
            <person name="Bloecker H."/>
            <person name="Brandt P."/>
            <person name="Chakraborty T."/>
            <person name="Charbit A."/>
            <person name="Chetouani F."/>
            <person name="Couve E."/>
            <person name="de Daruvar A."/>
            <person name="Dehoux P."/>
            <person name="Domann E."/>
            <person name="Dominguez-Bernal G."/>
            <person name="Duchaud E."/>
            <person name="Durant L."/>
            <person name="Dussurget O."/>
            <person name="Entian K.-D."/>
            <person name="Fsihi H."/>
            <person name="Garcia-del Portillo F."/>
            <person name="Garrido P."/>
            <person name="Gautier L."/>
            <person name="Goebel W."/>
            <person name="Gomez-Lopez N."/>
            <person name="Hain T."/>
            <person name="Hauf J."/>
            <person name="Jackson D."/>
            <person name="Jones L.-M."/>
            <person name="Kaerst U."/>
            <person name="Kreft J."/>
            <person name="Kuhn M."/>
            <person name="Kunst F."/>
            <person name="Kurapkat G."/>
            <person name="Madueno E."/>
            <person name="Maitournam A."/>
            <person name="Mata Vicente J."/>
            <person name="Ng E."/>
            <person name="Nedjari H."/>
            <person name="Nordsiek G."/>
            <person name="Novella S."/>
            <person name="de Pablos B."/>
            <person name="Perez-Diaz J.-C."/>
            <person name="Purcell R."/>
            <person name="Remmel B."/>
            <person name="Rose M."/>
            <person name="Schlueter T."/>
            <person name="Simoes N."/>
            <person name="Tierrez A."/>
            <person name="Vazquez-Boland J.-A."/>
            <person name="Voss H."/>
            <person name="Wehland J."/>
            <person name="Cossart P."/>
        </authorList>
    </citation>
    <scope>NUCLEOTIDE SEQUENCE [LARGE SCALE GENOMIC DNA]</scope>
    <source>
        <strain>ATCC BAA-680 / CLIP 11262</strain>
    </source>
</reference>
<accession>Q928P1</accession>
<dbReference type="EMBL" id="AL596172">
    <property type="protein sequence ID" value="CAC97718.1"/>
    <property type="molecule type" value="Genomic_DNA"/>
</dbReference>
<dbReference type="PIR" id="AF1743">
    <property type="entry name" value="AF1743"/>
</dbReference>
<dbReference type="RefSeq" id="WP_003725587.1">
    <property type="nucleotide sequence ID" value="NC_003212.1"/>
</dbReference>
<dbReference type="SMR" id="Q928P1"/>
<dbReference type="STRING" id="272626.gene:17566871"/>
<dbReference type="KEGG" id="lin:lin2491"/>
<dbReference type="eggNOG" id="COG4844">
    <property type="taxonomic scope" value="Bacteria"/>
</dbReference>
<dbReference type="HOGENOM" id="CLU_182025_0_0_9"/>
<dbReference type="OrthoDB" id="1684419at2"/>
<dbReference type="Proteomes" id="UP000002513">
    <property type="component" value="Chromosome"/>
</dbReference>
<dbReference type="HAMAP" id="MF_01542">
    <property type="entry name" value="UPF0349"/>
    <property type="match status" value="1"/>
</dbReference>
<dbReference type="InterPro" id="IPR009910">
    <property type="entry name" value="DUF1450"/>
</dbReference>
<dbReference type="InterPro" id="IPR022916">
    <property type="entry name" value="UPF0349"/>
</dbReference>
<dbReference type="NCBIfam" id="NF010190">
    <property type="entry name" value="PRK13669.1"/>
    <property type="match status" value="1"/>
</dbReference>
<dbReference type="Pfam" id="PF07293">
    <property type="entry name" value="DUF1450"/>
    <property type="match status" value="1"/>
</dbReference>
<gene>
    <name type="ordered locus">lin2491</name>
</gene>
<proteinExistence type="inferred from homology"/>
<name>Y2491_LISIN</name>
<comment type="similarity">
    <text evidence="1">Belongs to the UPF0349 family.</text>
</comment>